<dbReference type="EMBL" id="CP000705">
    <property type="protein sequence ID" value="ABQ83713.1"/>
    <property type="molecule type" value="Genomic_DNA"/>
</dbReference>
<dbReference type="RefSeq" id="WP_003664543.1">
    <property type="nucleotide sequence ID" value="NZ_AZDD01000010.1"/>
</dbReference>
<dbReference type="SMR" id="A5VLI9"/>
<dbReference type="STRING" id="557436.Lreu_1467"/>
<dbReference type="GeneID" id="77191463"/>
<dbReference type="KEGG" id="lre:Lreu_1467"/>
<dbReference type="eggNOG" id="COG0256">
    <property type="taxonomic scope" value="Bacteria"/>
</dbReference>
<dbReference type="HOGENOM" id="CLU_098841_0_1_9"/>
<dbReference type="Proteomes" id="UP000001991">
    <property type="component" value="Chromosome"/>
</dbReference>
<dbReference type="GO" id="GO:0022625">
    <property type="term" value="C:cytosolic large ribosomal subunit"/>
    <property type="evidence" value="ECO:0007669"/>
    <property type="project" value="TreeGrafter"/>
</dbReference>
<dbReference type="GO" id="GO:0008097">
    <property type="term" value="F:5S rRNA binding"/>
    <property type="evidence" value="ECO:0007669"/>
    <property type="project" value="TreeGrafter"/>
</dbReference>
<dbReference type="GO" id="GO:0003735">
    <property type="term" value="F:structural constituent of ribosome"/>
    <property type="evidence" value="ECO:0007669"/>
    <property type="project" value="InterPro"/>
</dbReference>
<dbReference type="GO" id="GO:0006412">
    <property type="term" value="P:translation"/>
    <property type="evidence" value="ECO:0007669"/>
    <property type="project" value="UniProtKB-UniRule"/>
</dbReference>
<dbReference type="CDD" id="cd00432">
    <property type="entry name" value="Ribosomal_L18_L5e"/>
    <property type="match status" value="1"/>
</dbReference>
<dbReference type="FunFam" id="3.30.420.100:FF:000001">
    <property type="entry name" value="50S ribosomal protein L18"/>
    <property type="match status" value="1"/>
</dbReference>
<dbReference type="Gene3D" id="3.30.420.100">
    <property type="match status" value="1"/>
</dbReference>
<dbReference type="HAMAP" id="MF_01337_B">
    <property type="entry name" value="Ribosomal_uL18_B"/>
    <property type="match status" value="1"/>
</dbReference>
<dbReference type="InterPro" id="IPR004389">
    <property type="entry name" value="Ribosomal_uL18_bac-type"/>
</dbReference>
<dbReference type="InterPro" id="IPR005484">
    <property type="entry name" value="Ribosomal_uL18_bac/euk"/>
</dbReference>
<dbReference type="NCBIfam" id="TIGR00060">
    <property type="entry name" value="L18_bact"/>
    <property type="match status" value="1"/>
</dbReference>
<dbReference type="PANTHER" id="PTHR12899">
    <property type="entry name" value="39S RIBOSOMAL PROTEIN L18, MITOCHONDRIAL"/>
    <property type="match status" value="1"/>
</dbReference>
<dbReference type="PANTHER" id="PTHR12899:SF3">
    <property type="entry name" value="LARGE RIBOSOMAL SUBUNIT PROTEIN UL18M"/>
    <property type="match status" value="1"/>
</dbReference>
<dbReference type="Pfam" id="PF00861">
    <property type="entry name" value="Ribosomal_L18p"/>
    <property type="match status" value="1"/>
</dbReference>
<dbReference type="SUPFAM" id="SSF53137">
    <property type="entry name" value="Translational machinery components"/>
    <property type="match status" value="1"/>
</dbReference>
<sequence length="118" mass="13043">MISKPDKNKIRQRRHLRVRGKISGTAERPRLSVYRSNKNIYAQLIDDVKGVTLASASTNDSEVSGKTKTEQASGVGALIAKRANEKNITEVVFDRGGYLYHGRVQALAEAARENGLKF</sequence>
<feature type="chain" id="PRO_1000067642" description="Large ribosomal subunit protein uL18">
    <location>
        <begin position="1"/>
        <end position="118"/>
    </location>
</feature>
<organism>
    <name type="scientific">Limosilactobacillus reuteri (strain DSM 20016)</name>
    <name type="common">Lactobacillus reuteri</name>
    <dbReference type="NCBI Taxonomy" id="557436"/>
    <lineage>
        <taxon>Bacteria</taxon>
        <taxon>Bacillati</taxon>
        <taxon>Bacillota</taxon>
        <taxon>Bacilli</taxon>
        <taxon>Lactobacillales</taxon>
        <taxon>Lactobacillaceae</taxon>
        <taxon>Limosilactobacillus</taxon>
    </lineage>
</organism>
<proteinExistence type="inferred from homology"/>
<name>RL18_LIMRD</name>
<evidence type="ECO:0000255" key="1">
    <source>
        <dbReference type="HAMAP-Rule" id="MF_01337"/>
    </source>
</evidence>
<evidence type="ECO:0000305" key="2"/>
<accession>A5VLI9</accession>
<protein>
    <recommendedName>
        <fullName evidence="1">Large ribosomal subunit protein uL18</fullName>
    </recommendedName>
    <alternativeName>
        <fullName evidence="2">50S ribosomal protein L18</fullName>
    </alternativeName>
</protein>
<gene>
    <name evidence="1" type="primary">rplR</name>
    <name type="ordered locus">Lreu_1467</name>
</gene>
<comment type="function">
    <text evidence="1">This is one of the proteins that bind and probably mediate the attachment of the 5S RNA into the large ribosomal subunit, where it forms part of the central protuberance.</text>
</comment>
<comment type="subunit">
    <text evidence="1">Part of the 50S ribosomal subunit; part of the 5S rRNA/L5/L18/L25 subcomplex. Contacts the 5S and 23S rRNAs.</text>
</comment>
<comment type="similarity">
    <text evidence="1">Belongs to the universal ribosomal protein uL18 family.</text>
</comment>
<keyword id="KW-1185">Reference proteome</keyword>
<keyword id="KW-0687">Ribonucleoprotein</keyword>
<keyword id="KW-0689">Ribosomal protein</keyword>
<keyword id="KW-0694">RNA-binding</keyword>
<keyword id="KW-0699">rRNA-binding</keyword>
<reference key="1">
    <citation type="journal article" date="2011" name="PLoS Genet.">
        <title>The evolution of host specialization in the vertebrate gut symbiont Lactobacillus reuteri.</title>
        <authorList>
            <person name="Frese S.A."/>
            <person name="Benson A.K."/>
            <person name="Tannock G.W."/>
            <person name="Loach D.M."/>
            <person name="Kim J."/>
            <person name="Zhang M."/>
            <person name="Oh P.L."/>
            <person name="Heng N.C."/>
            <person name="Patil P.B."/>
            <person name="Juge N."/>
            <person name="Mackenzie D.A."/>
            <person name="Pearson B.M."/>
            <person name="Lapidus A."/>
            <person name="Dalin E."/>
            <person name="Tice H."/>
            <person name="Goltsman E."/>
            <person name="Land M."/>
            <person name="Hauser L."/>
            <person name="Ivanova N."/>
            <person name="Kyrpides N.C."/>
            <person name="Walter J."/>
        </authorList>
    </citation>
    <scope>NUCLEOTIDE SEQUENCE [LARGE SCALE GENOMIC DNA]</scope>
    <source>
        <strain>DSM 20016</strain>
    </source>
</reference>